<comment type="function">
    <text evidence="1">One of the primary rRNA binding proteins, it binds directly near the 3'-end of the 23S rRNA, where it nucleates assembly of the 50S subunit.</text>
</comment>
<comment type="subunit">
    <text evidence="1">Part of the 50S ribosomal subunit. Forms a cluster with proteins L14 and L19.</text>
</comment>
<comment type="similarity">
    <text evidence="1">Belongs to the universal ribosomal protein uL3 family.</text>
</comment>
<dbReference type="EMBL" id="AP009380">
    <property type="protein sequence ID" value="BAG34387.1"/>
    <property type="molecule type" value="Genomic_DNA"/>
</dbReference>
<dbReference type="RefSeq" id="WP_010956449.1">
    <property type="nucleotide sequence ID" value="NZ_CP025930.1"/>
</dbReference>
<dbReference type="SMR" id="B2RLZ2"/>
<dbReference type="GeneID" id="29257019"/>
<dbReference type="KEGG" id="pgn:PGN_1868"/>
<dbReference type="eggNOG" id="COG0087">
    <property type="taxonomic scope" value="Bacteria"/>
</dbReference>
<dbReference type="HOGENOM" id="CLU_044142_4_1_10"/>
<dbReference type="OrthoDB" id="9806135at2"/>
<dbReference type="BioCyc" id="PGIN431947:G1G2V-2082-MONOMER"/>
<dbReference type="Proteomes" id="UP000008842">
    <property type="component" value="Chromosome"/>
</dbReference>
<dbReference type="GO" id="GO:0022625">
    <property type="term" value="C:cytosolic large ribosomal subunit"/>
    <property type="evidence" value="ECO:0007669"/>
    <property type="project" value="TreeGrafter"/>
</dbReference>
<dbReference type="GO" id="GO:0019843">
    <property type="term" value="F:rRNA binding"/>
    <property type="evidence" value="ECO:0007669"/>
    <property type="project" value="UniProtKB-UniRule"/>
</dbReference>
<dbReference type="GO" id="GO:0003735">
    <property type="term" value="F:structural constituent of ribosome"/>
    <property type="evidence" value="ECO:0007669"/>
    <property type="project" value="InterPro"/>
</dbReference>
<dbReference type="GO" id="GO:0006412">
    <property type="term" value="P:translation"/>
    <property type="evidence" value="ECO:0007669"/>
    <property type="project" value="UniProtKB-UniRule"/>
</dbReference>
<dbReference type="FunFam" id="2.40.30.10:FF:000047">
    <property type="entry name" value="50S ribosomal protein L3"/>
    <property type="match status" value="1"/>
</dbReference>
<dbReference type="FunFam" id="3.30.160.810:FF:000001">
    <property type="entry name" value="50S ribosomal protein L3"/>
    <property type="match status" value="1"/>
</dbReference>
<dbReference type="Gene3D" id="3.30.160.810">
    <property type="match status" value="1"/>
</dbReference>
<dbReference type="Gene3D" id="2.40.30.10">
    <property type="entry name" value="Translation factors"/>
    <property type="match status" value="1"/>
</dbReference>
<dbReference type="HAMAP" id="MF_01325_B">
    <property type="entry name" value="Ribosomal_uL3_B"/>
    <property type="match status" value="1"/>
</dbReference>
<dbReference type="InterPro" id="IPR000597">
    <property type="entry name" value="Ribosomal_uL3"/>
</dbReference>
<dbReference type="InterPro" id="IPR019927">
    <property type="entry name" value="Ribosomal_uL3_bac/org-type"/>
</dbReference>
<dbReference type="InterPro" id="IPR019926">
    <property type="entry name" value="Ribosomal_uL3_CS"/>
</dbReference>
<dbReference type="InterPro" id="IPR009000">
    <property type="entry name" value="Transl_B-barrel_sf"/>
</dbReference>
<dbReference type="NCBIfam" id="TIGR03625">
    <property type="entry name" value="L3_bact"/>
    <property type="match status" value="1"/>
</dbReference>
<dbReference type="PANTHER" id="PTHR11229">
    <property type="entry name" value="50S RIBOSOMAL PROTEIN L3"/>
    <property type="match status" value="1"/>
</dbReference>
<dbReference type="PANTHER" id="PTHR11229:SF16">
    <property type="entry name" value="LARGE RIBOSOMAL SUBUNIT PROTEIN UL3C"/>
    <property type="match status" value="1"/>
</dbReference>
<dbReference type="Pfam" id="PF00297">
    <property type="entry name" value="Ribosomal_L3"/>
    <property type="match status" value="1"/>
</dbReference>
<dbReference type="SUPFAM" id="SSF50447">
    <property type="entry name" value="Translation proteins"/>
    <property type="match status" value="1"/>
</dbReference>
<dbReference type="PROSITE" id="PS00474">
    <property type="entry name" value="RIBOSOMAL_L3"/>
    <property type="match status" value="1"/>
</dbReference>
<proteinExistence type="inferred from homology"/>
<organism>
    <name type="scientific">Porphyromonas gingivalis (strain ATCC 33277 / DSM 20709 / CIP 103683 / JCM 12257 / NCTC 11834 / 2561)</name>
    <dbReference type="NCBI Taxonomy" id="431947"/>
    <lineage>
        <taxon>Bacteria</taxon>
        <taxon>Pseudomonadati</taxon>
        <taxon>Bacteroidota</taxon>
        <taxon>Bacteroidia</taxon>
        <taxon>Bacteroidales</taxon>
        <taxon>Porphyromonadaceae</taxon>
        <taxon>Porphyromonas</taxon>
    </lineage>
</organism>
<gene>
    <name evidence="1" type="primary">rplC</name>
    <name type="ordered locus">PGN_1868</name>
</gene>
<name>RL3_PORG3</name>
<sequence>MPGLLGKKIGMTSVFSAEGKNLPCTVIEVGPCVVTQVKTLEKDGYSALQLGFVDAKEKHTTKPLAGHFKKANVAPKRHLAEFKNFEGEHKLGDVLNVEFFSDADFVDVVGTSKGKGFQGVVKRHGFGGVGQATHGQHNRLRAPGAVGACSYPAKVFKGTRMAGQMGNERVTVQNLEVIKVMPEHNLLLVKGSVPGAKGSILLIEK</sequence>
<feature type="chain" id="PRO_1000141900" description="Large ribosomal subunit protein uL3">
    <location>
        <begin position="1"/>
        <end position="205"/>
    </location>
</feature>
<reference key="1">
    <citation type="journal article" date="2008" name="DNA Res.">
        <title>Determination of the genome sequence of Porphyromonas gingivalis strain ATCC 33277 and genomic comparison with strain W83 revealed extensive genome rearrangements in P. gingivalis.</title>
        <authorList>
            <person name="Naito M."/>
            <person name="Hirakawa H."/>
            <person name="Yamashita A."/>
            <person name="Ohara N."/>
            <person name="Shoji M."/>
            <person name="Yukitake H."/>
            <person name="Nakayama K."/>
            <person name="Toh H."/>
            <person name="Yoshimura F."/>
            <person name="Kuhara S."/>
            <person name="Hattori M."/>
            <person name="Hayashi T."/>
            <person name="Nakayama K."/>
        </authorList>
    </citation>
    <scope>NUCLEOTIDE SEQUENCE [LARGE SCALE GENOMIC DNA]</scope>
    <source>
        <strain>ATCC 33277 / DSM 20709 / CIP 103683 / JCM 12257 / NCTC 11834 / 2561</strain>
    </source>
</reference>
<protein>
    <recommendedName>
        <fullName evidence="1">Large ribosomal subunit protein uL3</fullName>
    </recommendedName>
    <alternativeName>
        <fullName evidence="2">50S ribosomal protein L3</fullName>
    </alternativeName>
</protein>
<accession>B2RLZ2</accession>
<evidence type="ECO:0000255" key="1">
    <source>
        <dbReference type="HAMAP-Rule" id="MF_01325"/>
    </source>
</evidence>
<evidence type="ECO:0000305" key="2"/>
<keyword id="KW-0687">Ribonucleoprotein</keyword>
<keyword id="KW-0689">Ribosomal protein</keyword>
<keyword id="KW-0694">RNA-binding</keyword>
<keyword id="KW-0699">rRNA-binding</keyword>